<protein>
    <recommendedName>
        <fullName evidence="1">ATP-dependent protease ATPase subunit HslU</fullName>
    </recommendedName>
    <alternativeName>
        <fullName evidence="1">Unfoldase HslU</fullName>
    </alternativeName>
</protein>
<accession>Q0AD37</accession>
<sequence>MSHMTPQEIVHELDKHIIGQEAAKRSVAIALRNRWRRQQVGEPLRHEITPKNILMIGPTGVGKTEIARRLARLADAPFIKIEATKFTEVGYVGRDVDSIIRDLVESAIKQAREHEIRKNKPLAEDRAEERILDALLPSARDSGFDANPSEENNATRQKFRKKLREGELDDKEIDIEITMSQASMEIFAPPGMEELTSQIQGMFQNMGASKKKSRKLRIREARKLLTEEEAARLINDEELKLNAVQNVEQNGIVFLDEIDKITSRSEVSSSDISRQGVQRDLLPLVEGTTISTKYGMIRTDHILFIASGAFHLAKPSDLIPELQGRFPIRVELDSLSADDFKQILTNTDACLIRQYQALLKTEGIELNFSEDAIERLAEIAFSVNEITENIGARRLHTVMEKLLEDISFNATRYSGSTHVIDAAYVDERLGKLSQSEDLARYVL</sequence>
<feature type="chain" id="PRO_1000012762" description="ATP-dependent protease ATPase subunit HslU">
    <location>
        <begin position="1"/>
        <end position="443"/>
    </location>
</feature>
<feature type="region of interest" description="Disordered" evidence="2">
    <location>
        <begin position="139"/>
        <end position="161"/>
    </location>
</feature>
<feature type="binding site" evidence="1">
    <location>
        <position position="18"/>
    </location>
    <ligand>
        <name>ATP</name>
        <dbReference type="ChEBI" id="CHEBI:30616"/>
    </ligand>
</feature>
<feature type="binding site" evidence="1">
    <location>
        <begin position="60"/>
        <end position="65"/>
    </location>
    <ligand>
        <name>ATP</name>
        <dbReference type="ChEBI" id="CHEBI:30616"/>
    </ligand>
</feature>
<feature type="binding site" evidence="1">
    <location>
        <position position="256"/>
    </location>
    <ligand>
        <name>ATP</name>
        <dbReference type="ChEBI" id="CHEBI:30616"/>
    </ligand>
</feature>
<feature type="binding site" evidence="1">
    <location>
        <position position="321"/>
    </location>
    <ligand>
        <name>ATP</name>
        <dbReference type="ChEBI" id="CHEBI:30616"/>
    </ligand>
</feature>
<feature type="binding site" evidence="1">
    <location>
        <position position="393"/>
    </location>
    <ligand>
        <name>ATP</name>
        <dbReference type="ChEBI" id="CHEBI:30616"/>
    </ligand>
</feature>
<gene>
    <name evidence="1" type="primary">hslU</name>
    <name type="ordered locus">Neut_0611</name>
</gene>
<keyword id="KW-0067">ATP-binding</keyword>
<keyword id="KW-0143">Chaperone</keyword>
<keyword id="KW-0963">Cytoplasm</keyword>
<keyword id="KW-0547">Nucleotide-binding</keyword>
<keyword id="KW-0346">Stress response</keyword>
<reference key="1">
    <citation type="journal article" date="2007" name="Environ. Microbiol.">
        <title>Whole-genome analysis of the ammonia-oxidizing bacterium, Nitrosomonas eutropha C91: implications for niche adaptation.</title>
        <authorList>
            <person name="Stein L.Y."/>
            <person name="Arp D.J."/>
            <person name="Berube P.M."/>
            <person name="Chain P.S."/>
            <person name="Hauser L."/>
            <person name="Jetten M.S."/>
            <person name="Klotz M.G."/>
            <person name="Larimer F.W."/>
            <person name="Norton J.M."/>
            <person name="Op den Camp H.J.M."/>
            <person name="Shin M."/>
            <person name="Wei X."/>
        </authorList>
    </citation>
    <scope>NUCLEOTIDE SEQUENCE [LARGE SCALE GENOMIC DNA]</scope>
    <source>
        <strain>DSM 101675 / C91 / Nm57</strain>
    </source>
</reference>
<evidence type="ECO:0000255" key="1">
    <source>
        <dbReference type="HAMAP-Rule" id="MF_00249"/>
    </source>
</evidence>
<evidence type="ECO:0000256" key="2">
    <source>
        <dbReference type="SAM" id="MobiDB-lite"/>
    </source>
</evidence>
<organism>
    <name type="scientific">Nitrosomonas eutropha (strain DSM 101675 / C91 / Nm57)</name>
    <dbReference type="NCBI Taxonomy" id="335283"/>
    <lineage>
        <taxon>Bacteria</taxon>
        <taxon>Pseudomonadati</taxon>
        <taxon>Pseudomonadota</taxon>
        <taxon>Betaproteobacteria</taxon>
        <taxon>Nitrosomonadales</taxon>
        <taxon>Nitrosomonadaceae</taxon>
        <taxon>Nitrosomonas</taxon>
    </lineage>
</organism>
<comment type="function">
    <text evidence="1">ATPase subunit of a proteasome-like degradation complex; this subunit has chaperone activity. The binding of ATP and its subsequent hydrolysis by HslU are essential for unfolding of protein substrates subsequently hydrolyzed by HslV. HslU recognizes the N-terminal part of its protein substrates and unfolds these before they are guided to HslV for hydrolysis.</text>
</comment>
<comment type="subunit">
    <text evidence="1">A double ring-shaped homohexamer of HslV is capped on each side by a ring-shaped HslU homohexamer. The assembly of the HslU/HslV complex is dependent on binding of ATP.</text>
</comment>
<comment type="subcellular location">
    <subcellularLocation>
        <location evidence="1">Cytoplasm</location>
    </subcellularLocation>
</comment>
<comment type="similarity">
    <text evidence="1">Belongs to the ClpX chaperone family. HslU subfamily.</text>
</comment>
<dbReference type="EMBL" id="CP000450">
    <property type="protein sequence ID" value="ABI58883.1"/>
    <property type="molecule type" value="Genomic_DNA"/>
</dbReference>
<dbReference type="RefSeq" id="WP_011633724.1">
    <property type="nucleotide sequence ID" value="NC_008344.1"/>
</dbReference>
<dbReference type="SMR" id="Q0AD37"/>
<dbReference type="STRING" id="335283.Neut_0611"/>
<dbReference type="KEGG" id="net:Neut_0611"/>
<dbReference type="eggNOG" id="COG1220">
    <property type="taxonomic scope" value="Bacteria"/>
</dbReference>
<dbReference type="HOGENOM" id="CLU_033123_0_0_4"/>
<dbReference type="OrthoDB" id="9804062at2"/>
<dbReference type="Proteomes" id="UP000001966">
    <property type="component" value="Chromosome"/>
</dbReference>
<dbReference type="GO" id="GO:0009376">
    <property type="term" value="C:HslUV protease complex"/>
    <property type="evidence" value="ECO:0007669"/>
    <property type="project" value="UniProtKB-UniRule"/>
</dbReference>
<dbReference type="GO" id="GO:0005524">
    <property type="term" value="F:ATP binding"/>
    <property type="evidence" value="ECO:0007669"/>
    <property type="project" value="UniProtKB-UniRule"/>
</dbReference>
<dbReference type="GO" id="GO:0016887">
    <property type="term" value="F:ATP hydrolysis activity"/>
    <property type="evidence" value="ECO:0007669"/>
    <property type="project" value="InterPro"/>
</dbReference>
<dbReference type="GO" id="GO:0008233">
    <property type="term" value="F:peptidase activity"/>
    <property type="evidence" value="ECO:0007669"/>
    <property type="project" value="InterPro"/>
</dbReference>
<dbReference type="GO" id="GO:0036402">
    <property type="term" value="F:proteasome-activating activity"/>
    <property type="evidence" value="ECO:0007669"/>
    <property type="project" value="UniProtKB-UniRule"/>
</dbReference>
<dbReference type="GO" id="GO:0043335">
    <property type="term" value="P:protein unfolding"/>
    <property type="evidence" value="ECO:0007669"/>
    <property type="project" value="UniProtKB-UniRule"/>
</dbReference>
<dbReference type="GO" id="GO:0051603">
    <property type="term" value="P:proteolysis involved in protein catabolic process"/>
    <property type="evidence" value="ECO:0007669"/>
    <property type="project" value="TreeGrafter"/>
</dbReference>
<dbReference type="CDD" id="cd19498">
    <property type="entry name" value="RecA-like_HslU"/>
    <property type="match status" value="1"/>
</dbReference>
<dbReference type="FunFam" id="1.10.8.10:FF:000028">
    <property type="entry name" value="ATP-dependent protease ATPase subunit HslU"/>
    <property type="match status" value="1"/>
</dbReference>
<dbReference type="FunFam" id="3.40.50.300:FF:000213">
    <property type="entry name" value="ATP-dependent protease ATPase subunit HslU"/>
    <property type="match status" value="1"/>
</dbReference>
<dbReference type="FunFam" id="3.40.50.300:FF:000220">
    <property type="entry name" value="ATP-dependent protease ATPase subunit HslU"/>
    <property type="match status" value="1"/>
</dbReference>
<dbReference type="Gene3D" id="1.10.8.60">
    <property type="match status" value="1"/>
</dbReference>
<dbReference type="Gene3D" id="1.10.8.10">
    <property type="entry name" value="DNA helicase RuvA subunit, C-terminal domain"/>
    <property type="match status" value="1"/>
</dbReference>
<dbReference type="Gene3D" id="3.40.50.300">
    <property type="entry name" value="P-loop containing nucleotide triphosphate hydrolases"/>
    <property type="match status" value="2"/>
</dbReference>
<dbReference type="HAMAP" id="MF_00249">
    <property type="entry name" value="HslU"/>
    <property type="match status" value="1"/>
</dbReference>
<dbReference type="InterPro" id="IPR003593">
    <property type="entry name" value="AAA+_ATPase"/>
</dbReference>
<dbReference type="InterPro" id="IPR050052">
    <property type="entry name" value="ATP-dep_Clp_protease_ClpX"/>
</dbReference>
<dbReference type="InterPro" id="IPR003959">
    <property type="entry name" value="ATPase_AAA_core"/>
</dbReference>
<dbReference type="InterPro" id="IPR019489">
    <property type="entry name" value="Clp_ATPase_C"/>
</dbReference>
<dbReference type="InterPro" id="IPR004491">
    <property type="entry name" value="HslU"/>
</dbReference>
<dbReference type="InterPro" id="IPR027417">
    <property type="entry name" value="P-loop_NTPase"/>
</dbReference>
<dbReference type="NCBIfam" id="TIGR00390">
    <property type="entry name" value="hslU"/>
    <property type="match status" value="1"/>
</dbReference>
<dbReference type="NCBIfam" id="NF003544">
    <property type="entry name" value="PRK05201.1"/>
    <property type="match status" value="1"/>
</dbReference>
<dbReference type="PANTHER" id="PTHR48102">
    <property type="entry name" value="ATP-DEPENDENT CLP PROTEASE ATP-BINDING SUBUNIT CLPX-LIKE, MITOCHONDRIAL-RELATED"/>
    <property type="match status" value="1"/>
</dbReference>
<dbReference type="PANTHER" id="PTHR48102:SF3">
    <property type="entry name" value="ATP-DEPENDENT PROTEASE ATPASE SUBUNIT HSLU"/>
    <property type="match status" value="1"/>
</dbReference>
<dbReference type="Pfam" id="PF00004">
    <property type="entry name" value="AAA"/>
    <property type="match status" value="1"/>
</dbReference>
<dbReference type="Pfam" id="PF07724">
    <property type="entry name" value="AAA_2"/>
    <property type="match status" value="1"/>
</dbReference>
<dbReference type="Pfam" id="PF10431">
    <property type="entry name" value="ClpB_D2-small"/>
    <property type="match status" value="1"/>
</dbReference>
<dbReference type="SMART" id="SM00382">
    <property type="entry name" value="AAA"/>
    <property type="match status" value="1"/>
</dbReference>
<dbReference type="SMART" id="SM01086">
    <property type="entry name" value="ClpB_D2-small"/>
    <property type="match status" value="1"/>
</dbReference>
<dbReference type="SUPFAM" id="SSF52540">
    <property type="entry name" value="P-loop containing nucleoside triphosphate hydrolases"/>
    <property type="match status" value="1"/>
</dbReference>
<name>HSLU_NITEC</name>
<proteinExistence type="inferred from homology"/>